<proteinExistence type="evidence at protein level"/>
<organism>
    <name type="scientific">Gallus gallus</name>
    <name type="common">Chicken</name>
    <dbReference type="NCBI Taxonomy" id="9031"/>
    <lineage>
        <taxon>Eukaryota</taxon>
        <taxon>Metazoa</taxon>
        <taxon>Chordata</taxon>
        <taxon>Craniata</taxon>
        <taxon>Vertebrata</taxon>
        <taxon>Euteleostomi</taxon>
        <taxon>Archelosauria</taxon>
        <taxon>Archosauria</taxon>
        <taxon>Dinosauria</taxon>
        <taxon>Saurischia</taxon>
        <taxon>Theropoda</taxon>
        <taxon>Coelurosauria</taxon>
        <taxon>Aves</taxon>
        <taxon>Neognathae</taxon>
        <taxon>Galloanserae</taxon>
        <taxon>Galliformes</taxon>
        <taxon>Phasianidae</taxon>
        <taxon>Phasianinae</taxon>
        <taxon>Gallus</taxon>
    </lineage>
</organism>
<reference key="1">
    <citation type="journal article" date="1992" name="Biochem. J.">
        <title>Molecular cloning of a cDNA encoding the glycoprotein of hen oviduct microsomal signal peptidase.</title>
        <authorList>
            <person name="Newsome A.L."/>
            <person name="McLean J.W."/>
            <person name="Lively M.O."/>
        </authorList>
    </citation>
    <scope>NUCLEOTIDE SEQUENCE [MRNA]</scope>
    <scope>PARTIAL PROTEIN SEQUENCE</scope>
    <scope>GLYCOSYLATION AT ASN-141</scope>
    <source>
        <tissue>Oviduct</tissue>
    </source>
</reference>
<reference key="2">
    <citation type="journal article" date="1987" name="Biochemistry">
        <title>Purification and characterization of hen oviduct microsomal signal peptidase.</title>
        <authorList>
            <person name="Baker R.K."/>
            <person name="Lively M.O."/>
        </authorList>
    </citation>
    <scope>IDENTIFICATION IN THE SIGNAL PEPTIDASE COMPLEX</scope>
    <scope>TISSUE SPECIFICITY</scope>
</reference>
<gene>
    <name evidence="8" type="primary">SPCS3</name>
    <name evidence="7" type="synonym">SPC22</name>
</gene>
<dbReference type="EMBL" id="X60795">
    <property type="protein sequence ID" value="CAA43208.1"/>
    <property type="molecule type" value="mRNA"/>
</dbReference>
<dbReference type="PIR" id="S22412">
    <property type="entry name" value="S22412"/>
</dbReference>
<dbReference type="RefSeq" id="NP_990628.1">
    <property type="nucleotide sequence ID" value="NM_205297.2"/>
</dbReference>
<dbReference type="SMR" id="P28687"/>
<dbReference type="FunCoup" id="P28687">
    <property type="interactions" value="1170"/>
</dbReference>
<dbReference type="STRING" id="9031.ENSGALP00000017599"/>
<dbReference type="MEROPS" id="X45.001"/>
<dbReference type="GlyCosmos" id="P28687">
    <property type="glycosylation" value="1 site, No reported glycans"/>
</dbReference>
<dbReference type="GlyGen" id="P28687">
    <property type="glycosylation" value="1 site"/>
</dbReference>
<dbReference type="iPTMnet" id="P28687"/>
<dbReference type="PaxDb" id="9031-ENSGALP00000017599"/>
<dbReference type="Ensembl" id="ENSGALT00010008013.1">
    <property type="protein sequence ID" value="ENSGALP00010004801.1"/>
    <property type="gene ID" value="ENSGALG00010003442.1"/>
</dbReference>
<dbReference type="GeneID" id="396234"/>
<dbReference type="KEGG" id="gga:396234"/>
<dbReference type="CTD" id="60559"/>
<dbReference type="VEuPathDB" id="HostDB:geneid_396234"/>
<dbReference type="eggNOG" id="KOG3372">
    <property type="taxonomic scope" value="Eukaryota"/>
</dbReference>
<dbReference type="GeneTree" id="ENSGT00390000009223"/>
<dbReference type="InParanoid" id="P28687"/>
<dbReference type="OMA" id="FWDDGHG"/>
<dbReference type="OrthoDB" id="10261524at2759"/>
<dbReference type="PhylomeDB" id="P28687"/>
<dbReference type="Reactome" id="R-GGA-422085">
    <property type="pathway name" value="Synthesis, secretion, and deacylation of Ghrelin"/>
</dbReference>
<dbReference type="PRO" id="PR:P28687"/>
<dbReference type="Proteomes" id="UP000000539">
    <property type="component" value="Chromosome 4"/>
</dbReference>
<dbReference type="Bgee" id="ENSGALG00000010839">
    <property type="expression patterns" value="Expressed in granulocyte and 13 other cell types or tissues"/>
</dbReference>
<dbReference type="GO" id="GO:0005787">
    <property type="term" value="C:signal peptidase complex"/>
    <property type="evidence" value="ECO:0000318"/>
    <property type="project" value="GO_Central"/>
</dbReference>
<dbReference type="GO" id="GO:0045047">
    <property type="term" value="P:protein targeting to ER"/>
    <property type="evidence" value="ECO:0000318"/>
    <property type="project" value="GO_Central"/>
</dbReference>
<dbReference type="GO" id="GO:0006465">
    <property type="term" value="P:signal peptide processing"/>
    <property type="evidence" value="ECO:0000318"/>
    <property type="project" value="GO_Central"/>
</dbReference>
<dbReference type="InterPro" id="IPR007653">
    <property type="entry name" value="SPC3"/>
</dbReference>
<dbReference type="PANTHER" id="PTHR12804">
    <property type="entry name" value="MICROSOMAL SIGNAL PEPTIDASE 23 KD SUBUNIT SPC22/23"/>
    <property type="match status" value="1"/>
</dbReference>
<dbReference type="PANTHER" id="PTHR12804:SF0">
    <property type="entry name" value="SIGNAL PEPTIDASE COMPLEX SUBUNIT 3"/>
    <property type="match status" value="1"/>
</dbReference>
<dbReference type="Pfam" id="PF04573">
    <property type="entry name" value="SPC22"/>
    <property type="match status" value="1"/>
</dbReference>
<dbReference type="PIRSF" id="PIRSF016089">
    <property type="entry name" value="SPC22"/>
    <property type="match status" value="1"/>
</dbReference>
<accession>P28687</accession>
<evidence type="ECO:0000250" key="1">
    <source>
        <dbReference type="UniProtKB" id="P61008"/>
    </source>
</evidence>
<evidence type="ECO:0000250" key="2">
    <source>
        <dbReference type="UniProtKB" id="P61009"/>
    </source>
</evidence>
<evidence type="ECO:0000250" key="3">
    <source>
        <dbReference type="UniProtKB" id="Q12133"/>
    </source>
</evidence>
<evidence type="ECO:0000255" key="4"/>
<evidence type="ECO:0000269" key="5">
    <source>
    </source>
</evidence>
<evidence type="ECO:0000269" key="6">
    <source>
    </source>
</evidence>
<evidence type="ECO:0000303" key="7">
    <source>
    </source>
</evidence>
<evidence type="ECO:0000305" key="8"/>
<name>SPCS3_CHICK</name>
<protein>
    <recommendedName>
        <fullName>Signal peptidase complex subunit 3</fullName>
    </recommendedName>
    <alternativeName>
        <fullName>Microsomal signal peptidase 22/23 kDa subunit</fullName>
        <shortName>SPC22/23</shortName>
        <shortName>SPase 22/23 kDa subunit</shortName>
    </alternativeName>
    <alternativeName>
        <fullName>gp23</fullName>
    </alternativeName>
</protein>
<keyword id="KW-0903">Direct protein sequencing</keyword>
<keyword id="KW-0256">Endoplasmic reticulum</keyword>
<keyword id="KW-0325">Glycoprotein</keyword>
<keyword id="KW-0472">Membrane</keyword>
<keyword id="KW-1185">Reference proteome</keyword>
<keyword id="KW-0735">Signal-anchor</keyword>
<keyword id="KW-0812">Transmembrane</keyword>
<keyword id="KW-1133">Transmembrane helix</keyword>
<comment type="function">
    <text evidence="2 3">Essential component of the signal peptidase complex (SPC) which catalyzes the cleavage of N-terminal signal sequences from nascent proteins as they are translocated into the lumen of the endoplasmic reticulum (By similarity). Essential for the SPC catalytic activity, possibly by stabilizing and positioning the active center of the complex close to the lumenal surface (By similarity).</text>
</comment>
<comment type="subunit">
    <text evidence="2 6">Component of the signal peptidase complex paralog A (SPC-A) composed of a catalytic subunit SEC11A and three accessory subunits SPCS1, SPCS2 and SPCS3 (PubMed:2831945). Component of the signal peptidase complex paralog C (SPC-C) composed of a catalytic subunit SEC11C and three accessory subunits SPCS1, SPCS2 and SPCS3 (PubMed:2831945). The complex induces a local thinning of the ER membrane which is used to measure the length of the signal peptide (SP) h-region of protein substrates. This ensures the selectivity of the complex towards h-regions shorter than 18-20 amino acids (By similarity).</text>
</comment>
<comment type="subcellular location">
    <subcellularLocation>
        <location evidence="1">Endoplasmic reticulum membrane</location>
        <topology evidence="1">Single-pass type II membrane protein</topology>
    </subcellularLocation>
</comment>
<comment type="tissue specificity">
    <text evidence="6">Expressed in hen oviduct (at protein level).</text>
</comment>
<comment type="similarity">
    <text evidence="8">Belongs to the SPCS3 family.</text>
</comment>
<sequence length="180" mass="20230">MNTVLSRANSLFAFSLSVMAALTFGCFITTAFKERSVPVSIAVSRVTLRNVEDFTGPRERSDLAFVTFDITADLQSIFDWNVKQLFLYLSAEYSTKNNALNQVVLWDKIILRGDNPRLFLKDMKSKYFFFDDGNGLKGNRNVTLTLSWNVVPNAGLLPLVTGSGHMSVPFPDTYETTKSY</sequence>
<feature type="chain" id="PRO_0000218941" description="Signal peptidase complex subunit 3">
    <location>
        <begin position="1"/>
        <end position="180"/>
    </location>
</feature>
<feature type="topological domain" description="Cytoplasmic" evidence="1">
    <location>
        <begin position="1"/>
        <end position="11"/>
    </location>
</feature>
<feature type="transmembrane region" description="Helical; Signal-anchor for type II membrane protein" evidence="4">
    <location>
        <begin position="12"/>
        <end position="32"/>
    </location>
</feature>
<feature type="topological domain" description="Lumenal" evidence="1">
    <location>
        <begin position="33"/>
        <end position="180"/>
    </location>
</feature>
<feature type="glycosylation site" description="N-linked (GlcNAc...) asparagine" evidence="5">
    <location>
        <position position="141"/>
    </location>
</feature>